<reference key="1">
    <citation type="submission" date="2008-10" db="EMBL/GenBank/DDBJ databases">
        <title>The complete genome sequence of Helicobacter pylori strain P12.</title>
        <authorList>
            <person name="Fischer W."/>
            <person name="Windhager L."/>
            <person name="Karnholz A."/>
            <person name="Zeiller M."/>
            <person name="Zimmer R."/>
            <person name="Haas R."/>
        </authorList>
    </citation>
    <scope>NUCLEOTIDE SEQUENCE [LARGE SCALE GENOMIC DNA]</scope>
    <source>
        <strain>P12</strain>
    </source>
</reference>
<organism>
    <name type="scientific">Helicobacter pylori (strain P12)</name>
    <dbReference type="NCBI Taxonomy" id="570508"/>
    <lineage>
        <taxon>Bacteria</taxon>
        <taxon>Pseudomonadati</taxon>
        <taxon>Campylobacterota</taxon>
        <taxon>Epsilonproteobacteria</taxon>
        <taxon>Campylobacterales</taxon>
        <taxon>Helicobacteraceae</taxon>
        <taxon>Helicobacter</taxon>
    </lineage>
</organism>
<comment type="function">
    <text evidence="1">Binds to the 23S rRNA.</text>
</comment>
<comment type="similarity">
    <text evidence="1">Belongs to the bacterial ribosomal protein bL9 family.</text>
</comment>
<name>RL9_HELP2</name>
<evidence type="ECO:0000255" key="1">
    <source>
        <dbReference type="HAMAP-Rule" id="MF_00503"/>
    </source>
</evidence>
<evidence type="ECO:0000305" key="2"/>
<sequence length="149" mass="16449">MKILLLEDVKNLGKAGEVCEVKDGYGNNFLIANQKAKLATNEVINKYKAEAKKKAEKEALEKAQKLQMVETLQTITLTIHKKVGANGSLFGAITKEEITERLKEQHASLDLDKKDIELKHPIKSTGIYEIEVKLGSGVVGTFKIDVVAE</sequence>
<feature type="chain" id="PRO_1000126922" description="Large ribosomal subunit protein bL9">
    <location>
        <begin position="1"/>
        <end position="149"/>
    </location>
</feature>
<protein>
    <recommendedName>
        <fullName evidence="1">Large ribosomal subunit protein bL9</fullName>
    </recommendedName>
    <alternativeName>
        <fullName evidence="2">50S ribosomal protein L9</fullName>
    </alternativeName>
</protein>
<keyword id="KW-0687">Ribonucleoprotein</keyword>
<keyword id="KW-0689">Ribosomal protein</keyword>
<keyword id="KW-0694">RNA-binding</keyword>
<keyword id="KW-0699">rRNA-binding</keyword>
<accession>B6JL96</accession>
<dbReference type="EMBL" id="CP001217">
    <property type="protein sequence ID" value="ACJ07674.1"/>
    <property type="molecule type" value="Genomic_DNA"/>
</dbReference>
<dbReference type="SMR" id="B6JL96"/>
<dbReference type="KEGG" id="hpp:HPP12_0520"/>
<dbReference type="HOGENOM" id="CLU_078938_3_0_7"/>
<dbReference type="Proteomes" id="UP000008198">
    <property type="component" value="Chromosome"/>
</dbReference>
<dbReference type="GO" id="GO:1990904">
    <property type="term" value="C:ribonucleoprotein complex"/>
    <property type="evidence" value="ECO:0007669"/>
    <property type="project" value="UniProtKB-KW"/>
</dbReference>
<dbReference type="GO" id="GO:0005840">
    <property type="term" value="C:ribosome"/>
    <property type="evidence" value="ECO:0007669"/>
    <property type="project" value="UniProtKB-KW"/>
</dbReference>
<dbReference type="GO" id="GO:0019843">
    <property type="term" value="F:rRNA binding"/>
    <property type="evidence" value="ECO:0007669"/>
    <property type="project" value="UniProtKB-UniRule"/>
</dbReference>
<dbReference type="GO" id="GO:0003735">
    <property type="term" value="F:structural constituent of ribosome"/>
    <property type="evidence" value="ECO:0007669"/>
    <property type="project" value="InterPro"/>
</dbReference>
<dbReference type="GO" id="GO:0006412">
    <property type="term" value="P:translation"/>
    <property type="evidence" value="ECO:0007669"/>
    <property type="project" value="UniProtKB-UniRule"/>
</dbReference>
<dbReference type="FunFam" id="3.10.430.100:FF:000003">
    <property type="entry name" value="50S ribosomal protein L9"/>
    <property type="match status" value="1"/>
</dbReference>
<dbReference type="FunFam" id="3.40.5.10:FF:000002">
    <property type="entry name" value="50S ribosomal protein L9"/>
    <property type="match status" value="1"/>
</dbReference>
<dbReference type="Gene3D" id="3.10.430.100">
    <property type="entry name" value="Ribosomal protein L9, C-terminal domain"/>
    <property type="match status" value="1"/>
</dbReference>
<dbReference type="Gene3D" id="3.40.5.10">
    <property type="entry name" value="Ribosomal protein L9, N-terminal domain"/>
    <property type="match status" value="1"/>
</dbReference>
<dbReference type="HAMAP" id="MF_00503">
    <property type="entry name" value="Ribosomal_bL9"/>
    <property type="match status" value="1"/>
</dbReference>
<dbReference type="InterPro" id="IPR000244">
    <property type="entry name" value="Ribosomal_bL9"/>
</dbReference>
<dbReference type="InterPro" id="IPR009027">
    <property type="entry name" value="Ribosomal_bL9/RNase_H1_N"/>
</dbReference>
<dbReference type="InterPro" id="IPR020594">
    <property type="entry name" value="Ribosomal_bL9_bac/chp"/>
</dbReference>
<dbReference type="InterPro" id="IPR020069">
    <property type="entry name" value="Ribosomal_bL9_C"/>
</dbReference>
<dbReference type="InterPro" id="IPR036791">
    <property type="entry name" value="Ribosomal_bL9_C_sf"/>
</dbReference>
<dbReference type="InterPro" id="IPR020070">
    <property type="entry name" value="Ribosomal_bL9_N"/>
</dbReference>
<dbReference type="InterPro" id="IPR036935">
    <property type="entry name" value="Ribosomal_bL9_N_sf"/>
</dbReference>
<dbReference type="NCBIfam" id="TIGR00158">
    <property type="entry name" value="L9"/>
    <property type="match status" value="1"/>
</dbReference>
<dbReference type="PANTHER" id="PTHR21368">
    <property type="entry name" value="50S RIBOSOMAL PROTEIN L9"/>
    <property type="match status" value="1"/>
</dbReference>
<dbReference type="Pfam" id="PF03948">
    <property type="entry name" value="Ribosomal_L9_C"/>
    <property type="match status" value="1"/>
</dbReference>
<dbReference type="Pfam" id="PF01281">
    <property type="entry name" value="Ribosomal_L9_N"/>
    <property type="match status" value="1"/>
</dbReference>
<dbReference type="SUPFAM" id="SSF55658">
    <property type="entry name" value="L9 N-domain-like"/>
    <property type="match status" value="1"/>
</dbReference>
<dbReference type="SUPFAM" id="SSF55653">
    <property type="entry name" value="Ribosomal protein L9 C-domain"/>
    <property type="match status" value="1"/>
</dbReference>
<dbReference type="PROSITE" id="PS00651">
    <property type="entry name" value="RIBOSOMAL_L9"/>
    <property type="match status" value="1"/>
</dbReference>
<gene>
    <name evidence="1" type="primary">rplI</name>
    <name type="ordered locus">HPP12_0520</name>
</gene>
<proteinExistence type="inferred from homology"/>